<accession>B0K9R6</accession>
<name>RS2_THEP3</name>
<protein>
    <recommendedName>
        <fullName evidence="1">Small ribosomal subunit protein uS2</fullName>
    </recommendedName>
    <alternativeName>
        <fullName evidence="2">30S ribosomal protein S2</fullName>
    </alternativeName>
</protein>
<evidence type="ECO:0000255" key="1">
    <source>
        <dbReference type="HAMAP-Rule" id="MF_00291"/>
    </source>
</evidence>
<evidence type="ECO:0000305" key="2"/>
<sequence length="235" mass="26618">MSVISMKQLLEAGVHFGHQTRRWNPKMAPYIFTERNGIYIIDLQQTVEKLEQAYEFVKKLAMEGGTILFVGTKKQAQDSIKEEAERCGMFYVNQRWLGGTLTNFKTIRGRIQRLKELKKMEEDGTFDVLPKKEVIKLRKEKERLQKFLGGIENMESLPSALFIVDPKKEAIAVAEARSLEIPIVAIVDTNCDPELIDYPIPGNDDAIRAVKLITSKIADAVIEGNQGEQFAASEE</sequence>
<comment type="similarity">
    <text evidence="1">Belongs to the universal ribosomal protein uS2 family.</text>
</comment>
<keyword id="KW-1185">Reference proteome</keyword>
<keyword id="KW-0687">Ribonucleoprotein</keyword>
<keyword id="KW-0689">Ribosomal protein</keyword>
<organism>
    <name type="scientific">Thermoanaerobacter pseudethanolicus (strain ATCC 33223 / 39E)</name>
    <name type="common">Clostridium thermohydrosulfuricum</name>
    <dbReference type="NCBI Taxonomy" id="340099"/>
    <lineage>
        <taxon>Bacteria</taxon>
        <taxon>Bacillati</taxon>
        <taxon>Bacillota</taxon>
        <taxon>Clostridia</taxon>
        <taxon>Thermoanaerobacterales</taxon>
        <taxon>Thermoanaerobacteraceae</taxon>
        <taxon>Thermoanaerobacter</taxon>
    </lineage>
</organism>
<reference key="1">
    <citation type="submission" date="2008-01" db="EMBL/GenBank/DDBJ databases">
        <title>Complete sequence of Thermoanaerobacter pseudethanolicus 39E.</title>
        <authorList>
            <person name="Copeland A."/>
            <person name="Lucas S."/>
            <person name="Lapidus A."/>
            <person name="Barry K."/>
            <person name="Glavina del Rio T."/>
            <person name="Dalin E."/>
            <person name="Tice H."/>
            <person name="Pitluck S."/>
            <person name="Bruce D."/>
            <person name="Goodwin L."/>
            <person name="Saunders E."/>
            <person name="Brettin T."/>
            <person name="Detter J.C."/>
            <person name="Han C."/>
            <person name="Schmutz J."/>
            <person name="Larimer F."/>
            <person name="Land M."/>
            <person name="Hauser L."/>
            <person name="Kyrpides N."/>
            <person name="Lykidis A."/>
            <person name="Hemme C."/>
            <person name="Fields M.W."/>
            <person name="He Z."/>
            <person name="Zhou J."/>
            <person name="Richardson P."/>
        </authorList>
    </citation>
    <scope>NUCLEOTIDE SEQUENCE [LARGE SCALE GENOMIC DNA]</scope>
    <source>
        <strain>ATCC 33223 / DSM 2355 / 39E</strain>
    </source>
</reference>
<gene>
    <name evidence="1" type="primary">rpsB</name>
    <name type="ordered locus">Teth39_1225</name>
</gene>
<feature type="chain" id="PRO_1000115067" description="Small ribosomal subunit protein uS2">
    <location>
        <begin position="1"/>
        <end position="235"/>
    </location>
</feature>
<proteinExistence type="inferred from homology"/>
<dbReference type="EMBL" id="CP000924">
    <property type="protein sequence ID" value="ABY94879.1"/>
    <property type="molecule type" value="Genomic_DNA"/>
</dbReference>
<dbReference type="RefSeq" id="WP_012269359.1">
    <property type="nucleotide sequence ID" value="NC_010321.1"/>
</dbReference>
<dbReference type="SMR" id="B0K9R6"/>
<dbReference type="STRING" id="340099.Teth39_1225"/>
<dbReference type="KEGG" id="tpd:Teth39_1225"/>
<dbReference type="eggNOG" id="COG0052">
    <property type="taxonomic scope" value="Bacteria"/>
</dbReference>
<dbReference type="HOGENOM" id="CLU_040318_1_2_9"/>
<dbReference type="Proteomes" id="UP000002156">
    <property type="component" value="Chromosome"/>
</dbReference>
<dbReference type="GO" id="GO:0022627">
    <property type="term" value="C:cytosolic small ribosomal subunit"/>
    <property type="evidence" value="ECO:0007669"/>
    <property type="project" value="TreeGrafter"/>
</dbReference>
<dbReference type="GO" id="GO:0003735">
    <property type="term" value="F:structural constituent of ribosome"/>
    <property type="evidence" value="ECO:0007669"/>
    <property type="project" value="InterPro"/>
</dbReference>
<dbReference type="GO" id="GO:0006412">
    <property type="term" value="P:translation"/>
    <property type="evidence" value="ECO:0007669"/>
    <property type="project" value="UniProtKB-UniRule"/>
</dbReference>
<dbReference type="CDD" id="cd01425">
    <property type="entry name" value="RPS2"/>
    <property type="match status" value="1"/>
</dbReference>
<dbReference type="FunFam" id="1.10.287.610:FF:000001">
    <property type="entry name" value="30S ribosomal protein S2"/>
    <property type="match status" value="1"/>
</dbReference>
<dbReference type="Gene3D" id="3.40.50.10490">
    <property type="entry name" value="Glucose-6-phosphate isomerase like protein, domain 1"/>
    <property type="match status" value="1"/>
</dbReference>
<dbReference type="Gene3D" id="1.10.287.610">
    <property type="entry name" value="Helix hairpin bin"/>
    <property type="match status" value="1"/>
</dbReference>
<dbReference type="HAMAP" id="MF_00291_B">
    <property type="entry name" value="Ribosomal_uS2_B"/>
    <property type="match status" value="1"/>
</dbReference>
<dbReference type="InterPro" id="IPR001865">
    <property type="entry name" value="Ribosomal_uS2"/>
</dbReference>
<dbReference type="InterPro" id="IPR005706">
    <property type="entry name" value="Ribosomal_uS2_bac/mit/plastid"/>
</dbReference>
<dbReference type="InterPro" id="IPR018130">
    <property type="entry name" value="Ribosomal_uS2_CS"/>
</dbReference>
<dbReference type="InterPro" id="IPR023591">
    <property type="entry name" value="Ribosomal_uS2_flav_dom_sf"/>
</dbReference>
<dbReference type="NCBIfam" id="TIGR01011">
    <property type="entry name" value="rpsB_bact"/>
    <property type="match status" value="1"/>
</dbReference>
<dbReference type="PANTHER" id="PTHR12534">
    <property type="entry name" value="30S RIBOSOMAL PROTEIN S2 PROKARYOTIC AND ORGANELLAR"/>
    <property type="match status" value="1"/>
</dbReference>
<dbReference type="PANTHER" id="PTHR12534:SF0">
    <property type="entry name" value="SMALL RIBOSOMAL SUBUNIT PROTEIN US2M"/>
    <property type="match status" value="1"/>
</dbReference>
<dbReference type="Pfam" id="PF00318">
    <property type="entry name" value="Ribosomal_S2"/>
    <property type="match status" value="1"/>
</dbReference>
<dbReference type="PRINTS" id="PR00395">
    <property type="entry name" value="RIBOSOMALS2"/>
</dbReference>
<dbReference type="SUPFAM" id="SSF52313">
    <property type="entry name" value="Ribosomal protein S2"/>
    <property type="match status" value="1"/>
</dbReference>
<dbReference type="PROSITE" id="PS00962">
    <property type="entry name" value="RIBOSOMAL_S2_1"/>
    <property type="match status" value="1"/>
</dbReference>